<evidence type="ECO:0000255" key="1">
    <source>
        <dbReference type="HAMAP-Rule" id="MF_01445"/>
    </source>
</evidence>
<sequence length="338" mass="36190">MRVLGIETSCDETGIAVYDDKLGLLSHALYSQVKLHADYGGVVPELASRDHVRKIVPLIRQALKNANTEIADLDGIAYTKGPGLIGALLVGACVGRSLAFAWNKPAIGVHHMEGHLLAPMLEDDAPEFPFVALLVSGGHSMLVKVDGIGLYEVLGESVDDAAGEAFDKTAKLMGLDYPGGPRLAKLAAKGEPAGYQFPRPMTDRPGLDFSFSGLKTFTANTIAAEPDDEQTRANIARAFEEAVVDTLAIKCRRALKQTGYNRLVIAGGVSANTRLRETLAEMMTSIGGRVYYPRGEFCTDNGAMIAFAGLQRLKAGQQEDLAVKGQPRWPLDTLPPVA</sequence>
<gene>
    <name evidence="1" type="primary">tsaD</name>
    <name type="synonym">gcp</name>
    <name type="ordered locus">Shewana3_3083</name>
</gene>
<protein>
    <recommendedName>
        <fullName evidence="1">tRNA N6-adenosine threonylcarbamoyltransferase</fullName>
        <ecNumber evidence="1">2.3.1.234</ecNumber>
    </recommendedName>
    <alternativeName>
        <fullName evidence="1">N6-L-threonylcarbamoyladenine synthase</fullName>
        <shortName evidence="1">t(6)A synthase</shortName>
    </alternativeName>
    <alternativeName>
        <fullName evidence="1">t(6)A37 threonylcarbamoyladenosine biosynthesis protein TsaD</fullName>
    </alternativeName>
    <alternativeName>
        <fullName evidence="1">tRNA threonylcarbamoyladenosine biosynthesis protein TsaD</fullName>
    </alternativeName>
</protein>
<proteinExistence type="inferred from homology"/>
<accession>A0KZT8</accession>
<feature type="chain" id="PRO_0000303535" description="tRNA N6-adenosine threonylcarbamoyltransferase">
    <location>
        <begin position="1"/>
        <end position="338"/>
    </location>
</feature>
<feature type="binding site" evidence="1">
    <location>
        <position position="111"/>
    </location>
    <ligand>
        <name>Fe cation</name>
        <dbReference type="ChEBI" id="CHEBI:24875"/>
    </ligand>
</feature>
<feature type="binding site" evidence="1">
    <location>
        <position position="115"/>
    </location>
    <ligand>
        <name>Fe cation</name>
        <dbReference type="ChEBI" id="CHEBI:24875"/>
    </ligand>
</feature>
<feature type="binding site" evidence="1">
    <location>
        <begin position="134"/>
        <end position="138"/>
    </location>
    <ligand>
        <name>substrate</name>
    </ligand>
</feature>
<feature type="binding site" evidence="1">
    <location>
        <position position="167"/>
    </location>
    <ligand>
        <name>substrate</name>
    </ligand>
</feature>
<feature type="binding site" evidence="1">
    <location>
        <position position="180"/>
    </location>
    <ligand>
        <name>substrate</name>
    </ligand>
</feature>
<feature type="binding site" evidence="1">
    <location>
        <position position="272"/>
    </location>
    <ligand>
        <name>substrate</name>
    </ligand>
</feature>
<feature type="binding site" evidence="1">
    <location>
        <position position="300"/>
    </location>
    <ligand>
        <name>Fe cation</name>
        <dbReference type="ChEBI" id="CHEBI:24875"/>
    </ligand>
</feature>
<keyword id="KW-0012">Acyltransferase</keyword>
<keyword id="KW-0963">Cytoplasm</keyword>
<keyword id="KW-0408">Iron</keyword>
<keyword id="KW-0479">Metal-binding</keyword>
<keyword id="KW-0808">Transferase</keyword>
<keyword id="KW-0819">tRNA processing</keyword>
<reference key="1">
    <citation type="submission" date="2006-09" db="EMBL/GenBank/DDBJ databases">
        <title>Complete sequence of chromosome 1 of Shewanella sp. ANA-3.</title>
        <authorList>
            <person name="Copeland A."/>
            <person name="Lucas S."/>
            <person name="Lapidus A."/>
            <person name="Barry K."/>
            <person name="Detter J.C."/>
            <person name="Glavina del Rio T."/>
            <person name="Hammon N."/>
            <person name="Israni S."/>
            <person name="Dalin E."/>
            <person name="Tice H."/>
            <person name="Pitluck S."/>
            <person name="Chertkov O."/>
            <person name="Brettin T."/>
            <person name="Bruce D."/>
            <person name="Han C."/>
            <person name="Tapia R."/>
            <person name="Gilna P."/>
            <person name="Schmutz J."/>
            <person name="Larimer F."/>
            <person name="Land M."/>
            <person name="Hauser L."/>
            <person name="Kyrpides N."/>
            <person name="Kim E."/>
            <person name="Newman D."/>
            <person name="Salticov C."/>
            <person name="Konstantinidis K."/>
            <person name="Klappenback J."/>
            <person name="Tiedje J."/>
            <person name="Richardson P."/>
        </authorList>
    </citation>
    <scope>NUCLEOTIDE SEQUENCE [LARGE SCALE GENOMIC DNA]</scope>
    <source>
        <strain>ANA-3</strain>
    </source>
</reference>
<organism>
    <name type="scientific">Shewanella sp. (strain ANA-3)</name>
    <dbReference type="NCBI Taxonomy" id="94122"/>
    <lineage>
        <taxon>Bacteria</taxon>
        <taxon>Pseudomonadati</taxon>
        <taxon>Pseudomonadota</taxon>
        <taxon>Gammaproteobacteria</taxon>
        <taxon>Alteromonadales</taxon>
        <taxon>Shewanellaceae</taxon>
        <taxon>Shewanella</taxon>
    </lineage>
</organism>
<dbReference type="EC" id="2.3.1.234" evidence="1"/>
<dbReference type="EMBL" id="CP000469">
    <property type="protein sequence ID" value="ABK49307.1"/>
    <property type="molecule type" value="Genomic_DNA"/>
</dbReference>
<dbReference type="RefSeq" id="WP_011623654.1">
    <property type="nucleotide sequence ID" value="NC_008577.1"/>
</dbReference>
<dbReference type="SMR" id="A0KZT8"/>
<dbReference type="STRING" id="94122.Shewana3_3083"/>
<dbReference type="GeneID" id="94729003"/>
<dbReference type="KEGG" id="shn:Shewana3_3083"/>
<dbReference type="eggNOG" id="COG0533">
    <property type="taxonomic scope" value="Bacteria"/>
</dbReference>
<dbReference type="HOGENOM" id="CLU_023208_0_0_6"/>
<dbReference type="OrthoDB" id="9806197at2"/>
<dbReference type="Proteomes" id="UP000002589">
    <property type="component" value="Chromosome"/>
</dbReference>
<dbReference type="GO" id="GO:0005737">
    <property type="term" value="C:cytoplasm"/>
    <property type="evidence" value="ECO:0007669"/>
    <property type="project" value="UniProtKB-SubCell"/>
</dbReference>
<dbReference type="GO" id="GO:0005506">
    <property type="term" value="F:iron ion binding"/>
    <property type="evidence" value="ECO:0007669"/>
    <property type="project" value="UniProtKB-UniRule"/>
</dbReference>
<dbReference type="GO" id="GO:0061711">
    <property type="term" value="F:N(6)-L-threonylcarbamoyladenine synthase activity"/>
    <property type="evidence" value="ECO:0007669"/>
    <property type="project" value="UniProtKB-EC"/>
</dbReference>
<dbReference type="GO" id="GO:0002949">
    <property type="term" value="P:tRNA threonylcarbamoyladenosine modification"/>
    <property type="evidence" value="ECO:0007669"/>
    <property type="project" value="UniProtKB-UniRule"/>
</dbReference>
<dbReference type="CDD" id="cd24133">
    <property type="entry name" value="ASKHA_NBD_TsaD_bac"/>
    <property type="match status" value="1"/>
</dbReference>
<dbReference type="FunFam" id="3.30.420.40:FF:000031">
    <property type="entry name" value="tRNA N6-adenosine threonylcarbamoyltransferase"/>
    <property type="match status" value="1"/>
</dbReference>
<dbReference type="Gene3D" id="3.30.420.40">
    <property type="match status" value="2"/>
</dbReference>
<dbReference type="HAMAP" id="MF_01445">
    <property type="entry name" value="TsaD"/>
    <property type="match status" value="1"/>
</dbReference>
<dbReference type="InterPro" id="IPR043129">
    <property type="entry name" value="ATPase_NBD"/>
</dbReference>
<dbReference type="InterPro" id="IPR000905">
    <property type="entry name" value="Gcp-like_dom"/>
</dbReference>
<dbReference type="InterPro" id="IPR017861">
    <property type="entry name" value="KAE1/TsaD"/>
</dbReference>
<dbReference type="InterPro" id="IPR017860">
    <property type="entry name" value="Peptidase_M22_CS"/>
</dbReference>
<dbReference type="InterPro" id="IPR022450">
    <property type="entry name" value="TsaD"/>
</dbReference>
<dbReference type="NCBIfam" id="TIGR00329">
    <property type="entry name" value="gcp_kae1"/>
    <property type="match status" value="1"/>
</dbReference>
<dbReference type="NCBIfam" id="TIGR03723">
    <property type="entry name" value="T6A_TsaD_YgjD"/>
    <property type="match status" value="1"/>
</dbReference>
<dbReference type="PANTHER" id="PTHR11735">
    <property type="entry name" value="TRNA N6-ADENOSINE THREONYLCARBAMOYLTRANSFERASE"/>
    <property type="match status" value="1"/>
</dbReference>
<dbReference type="PANTHER" id="PTHR11735:SF6">
    <property type="entry name" value="TRNA N6-ADENOSINE THREONYLCARBAMOYLTRANSFERASE, MITOCHONDRIAL"/>
    <property type="match status" value="1"/>
</dbReference>
<dbReference type="Pfam" id="PF00814">
    <property type="entry name" value="TsaD"/>
    <property type="match status" value="1"/>
</dbReference>
<dbReference type="PRINTS" id="PR00789">
    <property type="entry name" value="OSIALOPTASE"/>
</dbReference>
<dbReference type="SUPFAM" id="SSF53067">
    <property type="entry name" value="Actin-like ATPase domain"/>
    <property type="match status" value="2"/>
</dbReference>
<dbReference type="PROSITE" id="PS01016">
    <property type="entry name" value="GLYCOPROTEASE"/>
    <property type="match status" value="1"/>
</dbReference>
<comment type="function">
    <text evidence="1">Required for the formation of a threonylcarbamoyl group on adenosine at position 37 (t(6)A37) in tRNAs that read codons beginning with adenine. Is involved in the transfer of the threonylcarbamoyl moiety of threonylcarbamoyl-AMP (TC-AMP) to the N6 group of A37, together with TsaE and TsaB. TsaD likely plays a direct catalytic role in this reaction.</text>
</comment>
<comment type="catalytic activity">
    <reaction evidence="1">
        <text>L-threonylcarbamoyladenylate + adenosine(37) in tRNA = N(6)-L-threonylcarbamoyladenosine(37) in tRNA + AMP + H(+)</text>
        <dbReference type="Rhea" id="RHEA:37059"/>
        <dbReference type="Rhea" id="RHEA-COMP:10162"/>
        <dbReference type="Rhea" id="RHEA-COMP:10163"/>
        <dbReference type="ChEBI" id="CHEBI:15378"/>
        <dbReference type="ChEBI" id="CHEBI:73682"/>
        <dbReference type="ChEBI" id="CHEBI:74411"/>
        <dbReference type="ChEBI" id="CHEBI:74418"/>
        <dbReference type="ChEBI" id="CHEBI:456215"/>
        <dbReference type="EC" id="2.3.1.234"/>
    </reaction>
</comment>
<comment type="cofactor">
    <cofactor evidence="1">
        <name>Fe(2+)</name>
        <dbReference type="ChEBI" id="CHEBI:29033"/>
    </cofactor>
    <text evidence="1">Binds 1 Fe(2+) ion per subunit.</text>
</comment>
<comment type="subcellular location">
    <subcellularLocation>
        <location evidence="1">Cytoplasm</location>
    </subcellularLocation>
</comment>
<comment type="similarity">
    <text evidence="1">Belongs to the KAE1 / TsaD family.</text>
</comment>
<name>TSAD_SHESA</name>